<keyword id="KW-1185">Reference proteome</keyword>
<keyword id="KW-0833">Ubl conjugation pathway</keyword>
<feature type="chain" id="PRO_0000406782" description="BTB/POZ domain-containing protein At4g01160">
    <location>
        <begin position="1"/>
        <end position="527"/>
    </location>
</feature>
<feature type="domain" description="BTB" evidence="2">
    <location>
        <begin position="111"/>
        <end position="180"/>
    </location>
</feature>
<feature type="domain" description="BACK">
    <location>
        <begin position="233"/>
        <end position="327"/>
    </location>
</feature>
<sequence length="527" mass="59237">MDLSLSGGDFRFAFNNVNFSDRLLRIEITQSSGEGEVICSSIVDWARDRKRRREDVTNHTNDATCHVESDLNKNSCEIVNENSNNKTQVLVTAAEQEPKSGGEDENERLTNNNTSVLSVQELHISSAILAAKSPFFYKLFSNGMLESEQKQMTLKIDASEETAVMELLKFMYSNSLSVTASSALLDVLMVADKFEVASCMKYCSQLLLKMPMTLESSLLLLDLPSSLLMADSVKPLTNAARQFIASRYKNMSKITMEELMALPLVGIEAILASDGLEIQSEDVVYEVVLKWVKSHYSVLEARQEVLGSHLARYIRFPHMTTDRLKKILTSNDFRPSVASKLVVEALFFKTESLAHQHVLLAHEQPASTSRRFAKRAYVHRPIKIVEFAVPRPQCIIYLDLKRKECESIYPSSRISSQQFTLGGQGFFLSAQCNMDHLCLIHCFGLFIGMQENGSASASVTVDYDFSVRSKPTMEFVGKFKGIYTFTRGKAVGCRNLLGIPWDIFTAKNCPYFINDVLHLRADLSIRL</sequence>
<comment type="function">
    <text evidence="1">May act as a substrate-specific adapter of an E3 ubiquitin-protein ligase complex (CUL3-RBX1-BTB) which mediates the ubiquitination and subsequent proteasomal degradation of target proteins.</text>
</comment>
<comment type="pathway">
    <text>Protein modification; protein ubiquitination.</text>
</comment>
<comment type="domain">
    <text evidence="3">The BTB/POZ domain mediates the interaction with some component of ubiquitin ligase complexes.</text>
</comment>
<comment type="sequence caution" evidence="4">
    <conflict type="erroneous gene model prediction">
        <sequence resource="EMBL-CDS" id="AEE81989"/>
    </conflict>
</comment>
<evidence type="ECO:0000250" key="1"/>
<evidence type="ECO:0000255" key="2">
    <source>
        <dbReference type="PROSITE-ProRule" id="PRU00037"/>
    </source>
</evidence>
<evidence type="ECO:0000269" key="3">
    <source>
    </source>
</evidence>
<evidence type="ECO:0000305" key="4"/>
<proteinExistence type="inferred from homology"/>
<organism>
    <name type="scientific">Arabidopsis thaliana</name>
    <name type="common">Mouse-ear cress</name>
    <dbReference type="NCBI Taxonomy" id="3702"/>
    <lineage>
        <taxon>Eukaryota</taxon>
        <taxon>Viridiplantae</taxon>
        <taxon>Streptophyta</taxon>
        <taxon>Embryophyta</taxon>
        <taxon>Tracheophyta</taxon>
        <taxon>Spermatophyta</taxon>
        <taxon>Magnoliopsida</taxon>
        <taxon>eudicotyledons</taxon>
        <taxon>Gunneridae</taxon>
        <taxon>Pentapetalae</taxon>
        <taxon>rosids</taxon>
        <taxon>malvids</taxon>
        <taxon>Brassicales</taxon>
        <taxon>Brassicaceae</taxon>
        <taxon>Camelineae</taxon>
        <taxon>Arabidopsis</taxon>
    </lineage>
</organism>
<protein>
    <recommendedName>
        <fullName>BTB/POZ domain-containing protein At4g01160</fullName>
    </recommendedName>
</protein>
<accession>O04615</accession>
<accession>F4JHY9</accession>
<gene>
    <name type="ordered locus">At4g01160</name>
    <name type="ORF">A_IG002N01.11</name>
    <name type="ORF">F2N1.11</name>
</gene>
<name>Y4116_ARATH</name>
<reference key="1">
    <citation type="journal article" date="1999" name="Nature">
        <title>Sequence and analysis of chromosome 4 of the plant Arabidopsis thaliana.</title>
        <authorList>
            <person name="Mayer K.F.X."/>
            <person name="Schueller C."/>
            <person name="Wambutt R."/>
            <person name="Murphy G."/>
            <person name="Volckaert G."/>
            <person name="Pohl T."/>
            <person name="Duesterhoeft A."/>
            <person name="Stiekema W."/>
            <person name="Entian K.-D."/>
            <person name="Terryn N."/>
            <person name="Harris B."/>
            <person name="Ansorge W."/>
            <person name="Brandt P."/>
            <person name="Grivell L.A."/>
            <person name="Rieger M."/>
            <person name="Weichselgartner M."/>
            <person name="de Simone V."/>
            <person name="Obermaier B."/>
            <person name="Mache R."/>
            <person name="Mueller M."/>
            <person name="Kreis M."/>
            <person name="Delseny M."/>
            <person name="Puigdomenech P."/>
            <person name="Watson M."/>
            <person name="Schmidtheini T."/>
            <person name="Reichert B."/>
            <person name="Portetelle D."/>
            <person name="Perez-Alonso M."/>
            <person name="Boutry M."/>
            <person name="Bancroft I."/>
            <person name="Vos P."/>
            <person name="Hoheisel J."/>
            <person name="Zimmermann W."/>
            <person name="Wedler H."/>
            <person name="Ridley P."/>
            <person name="Langham S.-A."/>
            <person name="McCullagh B."/>
            <person name="Bilham L."/>
            <person name="Robben J."/>
            <person name="van der Schueren J."/>
            <person name="Grymonprez B."/>
            <person name="Chuang Y.-J."/>
            <person name="Vandenbussche F."/>
            <person name="Braeken M."/>
            <person name="Weltjens I."/>
            <person name="Voet M."/>
            <person name="Bastiaens I."/>
            <person name="Aert R."/>
            <person name="Defoor E."/>
            <person name="Weitzenegger T."/>
            <person name="Bothe G."/>
            <person name="Ramsperger U."/>
            <person name="Hilbert H."/>
            <person name="Braun M."/>
            <person name="Holzer E."/>
            <person name="Brandt A."/>
            <person name="Peters S."/>
            <person name="van Staveren M."/>
            <person name="Dirkse W."/>
            <person name="Mooijman P."/>
            <person name="Klein Lankhorst R."/>
            <person name="Rose M."/>
            <person name="Hauf J."/>
            <person name="Koetter P."/>
            <person name="Berneiser S."/>
            <person name="Hempel S."/>
            <person name="Feldpausch M."/>
            <person name="Lamberth S."/>
            <person name="Van den Daele H."/>
            <person name="De Keyser A."/>
            <person name="Buysshaert C."/>
            <person name="Gielen J."/>
            <person name="Villarroel R."/>
            <person name="De Clercq R."/>
            <person name="van Montagu M."/>
            <person name="Rogers J."/>
            <person name="Cronin A."/>
            <person name="Quail M.A."/>
            <person name="Bray-Allen S."/>
            <person name="Clark L."/>
            <person name="Doggett J."/>
            <person name="Hall S."/>
            <person name="Kay M."/>
            <person name="Lennard N."/>
            <person name="McLay K."/>
            <person name="Mayes R."/>
            <person name="Pettett A."/>
            <person name="Rajandream M.A."/>
            <person name="Lyne M."/>
            <person name="Benes V."/>
            <person name="Rechmann S."/>
            <person name="Borkova D."/>
            <person name="Bloecker H."/>
            <person name="Scharfe M."/>
            <person name="Grimm M."/>
            <person name="Loehnert T.-H."/>
            <person name="Dose S."/>
            <person name="de Haan M."/>
            <person name="Maarse A.C."/>
            <person name="Schaefer M."/>
            <person name="Mueller-Auer S."/>
            <person name="Gabel C."/>
            <person name="Fuchs M."/>
            <person name="Fartmann B."/>
            <person name="Granderath K."/>
            <person name="Dauner D."/>
            <person name="Herzl A."/>
            <person name="Neumann S."/>
            <person name="Argiriou A."/>
            <person name="Vitale D."/>
            <person name="Liguori R."/>
            <person name="Piravandi E."/>
            <person name="Massenet O."/>
            <person name="Quigley F."/>
            <person name="Clabauld G."/>
            <person name="Muendlein A."/>
            <person name="Felber R."/>
            <person name="Schnabl S."/>
            <person name="Hiller R."/>
            <person name="Schmidt W."/>
            <person name="Lecharny A."/>
            <person name="Aubourg S."/>
            <person name="Chefdor F."/>
            <person name="Cooke R."/>
            <person name="Berger C."/>
            <person name="Monfort A."/>
            <person name="Casacuberta E."/>
            <person name="Gibbons T."/>
            <person name="Weber N."/>
            <person name="Vandenbol M."/>
            <person name="Bargues M."/>
            <person name="Terol J."/>
            <person name="Torres A."/>
            <person name="Perez-Perez A."/>
            <person name="Purnelle B."/>
            <person name="Bent E."/>
            <person name="Johnson S."/>
            <person name="Tacon D."/>
            <person name="Jesse T."/>
            <person name="Heijnen L."/>
            <person name="Schwarz S."/>
            <person name="Scholler P."/>
            <person name="Heber S."/>
            <person name="Francs P."/>
            <person name="Bielke C."/>
            <person name="Frishman D."/>
            <person name="Haase D."/>
            <person name="Lemcke K."/>
            <person name="Mewes H.-W."/>
            <person name="Stocker S."/>
            <person name="Zaccaria P."/>
            <person name="Bevan M."/>
            <person name="Wilson R.K."/>
            <person name="de la Bastide M."/>
            <person name="Habermann K."/>
            <person name="Parnell L."/>
            <person name="Dedhia N."/>
            <person name="Gnoj L."/>
            <person name="Schutz K."/>
            <person name="Huang E."/>
            <person name="Spiegel L."/>
            <person name="Sekhon M."/>
            <person name="Murray J."/>
            <person name="Sheet P."/>
            <person name="Cordes M."/>
            <person name="Abu-Threideh J."/>
            <person name="Stoneking T."/>
            <person name="Kalicki J."/>
            <person name="Graves T."/>
            <person name="Harmon G."/>
            <person name="Edwards J."/>
            <person name="Latreille P."/>
            <person name="Courtney L."/>
            <person name="Cloud J."/>
            <person name="Abbott A."/>
            <person name="Scott K."/>
            <person name="Johnson D."/>
            <person name="Minx P."/>
            <person name="Bentley D."/>
            <person name="Fulton B."/>
            <person name="Miller N."/>
            <person name="Greco T."/>
            <person name="Kemp K."/>
            <person name="Kramer J."/>
            <person name="Fulton L."/>
            <person name="Mardis E."/>
            <person name="Dante M."/>
            <person name="Pepin K."/>
            <person name="Hillier L.W."/>
            <person name="Nelson J."/>
            <person name="Spieth J."/>
            <person name="Ryan E."/>
            <person name="Andrews S."/>
            <person name="Geisel C."/>
            <person name="Layman D."/>
            <person name="Du H."/>
            <person name="Ali J."/>
            <person name="Berghoff A."/>
            <person name="Jones K."/>
            <person name="Drone K."/>
            <person name="Cotton M."/>
            <person name="Joshu C."/>
            <person name="Antonoiu B."/>
            <person name="Zidanic M."/>
            <person name="Strong C."/>
            <person name="Sun H."/>
            <person name="Lamar B."/>
            <person name="Yordan C."/>
            <person name="Ma P."/>
            <person name="Zhong J."/>
            <person name="Preston R."/>
            <person name="Vil D."/>
            <person name="Shekher M."/>
            <person name="Matero A."/>
            <person name="Shah R."/>
            <person name="Swaby I.K."/>
            <person name="O'Shaughnessy A."/>
            <person name="Rodriguez M."/>
            <person name="Hoffman J."/>
            <person name="Till S."/>
            <person name="Granat S."/>
            <person name="Shohdy N."/>
            <person name="Hasegawa A."/>
            <person name="Hameed A."/>
            <person name="Lodhi M."/>
            <person name="Johnson A."/>
            <person name="Chen E."/>
            <person name="Marra M.A."/>
            <person name="Martienssen R."/>
            <person name="McCombie W.R."/>
        </authorList>
    </citation>
    <scope>NUCLEOTIDE SEQUENCE [LARGE SCALE GENOMIC DNA]</scope>
    <source>
        <strain>cv. Columbia</strain>
    </source>
</reference>
<reference key="2">
    <citation type="journal article" date="2017" name="Plant J.">
        <title>Araport11: a complete reannotation of the Arabidopsis thaliana reference genome.</title>
        <authorList>
            <person name="Cheng C.Y."/>
            <person name="Krishnakumar V."/>
            <person name="Chan A.P."/>
            <person name="Thibaud-Nissen F."/>
            <person name="Schobel S."/>
            <person name="Town C.D."/>
        </authorList>
    </citation>
    <scope>GENOME REANNOTATION</scope>
    <source>
        <strain>cv. Columbia</strain>
    </source>
</reference>
<reference key="3">
    <citation type="journal article" date="2005" name="J. Biol. Chem.">
        <title>Cullins 3a and 3b assemble with members of the broad complex/tramtrack/bric-a-brac (BTB) protein family to form essential ubiquitin-protein ligases (E3s) in Arabidopsis.</title>
        <authorList>
            <person name="Gingerich D.J."/>
            <person name="Gagne J.M."/>
            <person name="Salter D.W."/>
            <person name="Hellmann H."/>
            <person name="Estelle M."/>
            <person name="Ma L."/>
            <person name="Vierstra R.D."/>
        </authorList>
    </citation>
    <scope>DOMAIN BTB</scope>
</reference>
<dbReference type="EMBL" id="AF007269">
    <property type="protein sequence ID" value="AAB61041.1"/>
    <property type="molecule type" value="Genomic_DNA"/>
</dbReference>
<dbReference type="EMBL" id="AL161491">
    <property type="protein sequence ID" value="CAB80925.1"/>
    <property type="molecule type" value="Genomic_DNA"/>
</dbReference>
<dbReference type="EMBL" id="CP002687">
    <property type="protein sequence ID" value="AEE81989.1"/>
    <property type="status" value="ALT_SEQ"/>
    <property type="molecule type" value="Genomic_DNA"/>
</dbReference>
<dbReference type="EMBL" id="CP002687">
    <property type="protein sequence ID" value="ANM66602.1"/>
    <property type="molecule type" value="Genomic_DNA"/>
</dbReference>
<dbReference type="PIR" id="T01725">
    <property type="entry name" value="T01725"/>
</dbReference>
<dbReference type="RefSeq" id="NP_001328487.1">
    <property type="nucleotide sequence ID" value="NM_001340303.1"/>
</dbReference>
<dbReference type="RefSeq" id="NP_192025.2">
    <property type="nucleotide sequence ID" value="NM_116346.3"/>
</dbReference>
<dbReference type="SMR" id="O04615"/>
<dbReference type="FunCoup" id="O04615">
    <property type="interactions" value="265"/>
</dbReference>
<dbReference type="STRING" id="3702.O04615"/>
<dbReference type="iPTMnet" id="O04615"/>
<dbReference type="EnsemblPlants" id="AT4G01160.2">
    <property type="protein sequence ID" value="AT4G01160.2"/>
    <property type="gene ID" value="AT4G01160"/>
</dbReference>
<dbReference type="GeneID" id="828156"/>
<dbReference type="Gramene" id="AT4G01160.2">
    <property type="protein sequence ID" value="AT4G01160.2"/>
    <property type="gene ID" value="AT4G01160"/>
</dbReference>
<dbReference type="KEGG" id="ath:AT4G01160"/>
<dbReference type="Araport" id="AT4G01160"/>
<dbReference type="TAIR" id="AT4G01160">
    <property type="gene designation" value="LRB3"/>
</dbReference>
<dbReference type="eggNOG" id="ENOG502QT6M">
    <property type="taxonomic scope" value="Eukaryota"/>
</dbReference>
<dbReference type="HOGENOM" id="CLU_024600_2_0_1"/>
<dbReference type="InParanoid" id="O04615"/>
<dbReference type="PhylomeDB" id="O04615"/>
<dbReference type="UniPathway" id="UPA00143"/>
<dbReference type="PRO" id="PR:O04615"/>
<dbReference type="Proteomes" id="UP000006548">
    <property type="component" value="Chromosome 4"/>
</dbReference>
<dbReference type="ExpressionAtlas" id="O04615">
    <property type="expression patterns" value="baseline and differential"/>
</dbReference>
<dbReference type="GO" id="GO:0016567">
    <property type="term" value="P:protein ubiquitination"/>
    <property type="evidence" value="ECO:0007669"/>
    <property type="project" value="UniProtKB-UniPathway"/>
</dbReference>
<dbReference type="CDD" id="cd18186">
    <property type="entry name" value="BTB_POZ_ZBTB_KLHL-like"/>
    <property type="match status" value="1"/>
</dbReference>
<dbReference type="FunFam" id="1.25.40.420:FF:000008">
    <property type="entry name" value="BTB/POZ domain-containing protein POB1"/>
    <property type="match status" value="1"/>
</dbReference>
<dbReference type="FunFam" id="3.30.710.10:FF:000106">
    <property type="entry name" value="BTB/POZ domain-containing protein POB1"/>
    <property type="match status" value="1"/>
</dbReference>
<dbReference type="Gene3D" id="1.25.40.420">
    <property type="match status" value="1"/>
</dbReference>
<dbReference type="Gene3D" id="3.30.710.10">
    <property type="entry name" value="Potassium Channel Kv1.1, Chain A"/>
    <property type="match status" value="1"/>
</dbReference>
<dbReference type="InterPro" id="IPR011705">
    <property type="entry name" value="BACK"/>
</dbReference>
<dbReference type="InterPro" id="IPR000210">
    <property type="entry name" value="BTB/POZ_dom"/>
</dbReference>
<dbReference type="InterPro" id="IPR045890">
    <property type="entry name" value="POB1-like"/>
</dbReference>
<dbReference type="InterPro" id="IPR011333">
    <property type="entry name" value="SKP1/BTB/POZ_sf"/>
</dbReference>
<dbReference type="PANTHER" id="PTHR46336:SF8">
    <property type="entry name" value="BTB DOMAIN-CONTAINING PROTEIN"/>
    <property type="match status" value="1"/>
</dbReference>
<dbReference type="PANTHER" id="PTHR46336">
    <property type="entry name" value="OS02G0260700 PROTEIN"/>
    <property type="match status" value="1"/>
</dbReference>
<dbReference type="Pfam" id="PF07707">
    <property type="entry name" value="BACK"/>
    <property type="match status" value="1"/>
</dbReference>
<dbReference type="Pfam" id="PF00651">
    <property type="entry name" value="BTB"/>
    <property type="match status" value="1"/>
</dbReference>
<dbReference type="SMART" id="SM00875">
    <property type="entry name" value="BACK"/>
    <property type="match status" value="1"/>
</dbReference>
<dbReference type="SMART" id="SM00225">
    <property type="entry name" value="BTB"/>
    <property type="match status" value="1"/>
</dbReference>
<dbReference type="SUPFAM" id="SSF54695">
    <property type="entry name" value="POZ domain"/>
    <property type="match status" value="1"/>
</dbReference>
<dbReference type="PROSITE" id="PS50097">
    <property type="entry name" value="BTB"/>
    <property type="match status" value="1"/>
</dbReference>